<accession>A8GXS7</accession>
<proteinExistence type="inferred from homology"/>
<gene>
    <name evidence="1" type="primary">rsmA</name>
    <name evidence="1" type="synonym">ksgA</name>
    <name type="ordered locus">A1I_06805</name>
</gene>
<protein>
    <recommendedName>
        <fullName evidence="1">Ribosomal RNA small subunit methyltransferase A</fullName>
        <ecNumber evidence="1">2.1.1.182</ecNumber>
    </recommendedName>
    <alternativeName>
        <fullName evidence="1">16S rRNA (adenine(1518)-N(6)/adenine(1519)-N(6))-dimethyltransferase</fullName>
    </alternativeName>
    <alternativeName>
        <fullName evidence="1">16S rRNA dimethyladenosine transferase</fullName>
    </alternativeName>
    <alternativeName>
        <fullName evidence="1">16S rRNA dimethylase</fullName>
    </alternativeName>
    <alternativeName>
        <fullName evidence="1">S-adenosylmethionine-6-N', N'-adenosyl(rRNA) dimethyltransferase</fullName>
    </alternativeName>
</protein>
<comment type="function">
    <text evidence="1">Specifically dimethylates two adjacent adenosines (A1518 and A1519) in the loop of a conserved hairpin near the 3'-end of 16S rRNA in the 30S particle. May play a critical role in biogenesis of 30S subunits.</text>
</comment>
<comment type="catalytic activity">
    <reaction evidence="1">
        <text>adenosine(1518)/adenosine(1519) in 16S rRNA + 4 S-adenosyl-L-methionine = N(6)-dimethyladenosine(1518)/N(6)-dimethyladenosine(1519) in 16S rRNA + 4 S-adenosyl-L-homocysteine + 4 H(+)</text>
        <dbReference type="Rhea" id="RHEA:19609"/>
        <dbReference type="Rhea" id="RHEA-COMP:10232"/>
        <dbReference type="Rhea" id="RHEA-COMP:10233"/>
        <dbReference type="ChEBI" id="CHEBI:15378"/>
        <dbReference type="ChEBI" id="CHEBI:57856"/>
        <dbReference type="ChEBI" id="CHEBI:59789"/>
        <dbReference type="ChEBI" id="CHEBI:74411"/>
        <dbReference type="ChEBI" id="CHEBI:74493"/>
        <dbReference type="EC" id="2.1.1.182"/>
    </reaction>
</comment>
<comment type="subcellular location">
    <subcellularLocation>
        <location evidence="1">Cytoplasm</location>
    </subcellularLocation>
</comment>
<comment type="similarity">
    <text evidence="1">Belongs to the class I-like SAM-binding methyltransferase superfamily. rRNA adenine N(6)-methyltransferase family. RsmA subfamily.</text>
</comment>
<sequence length="268" mass="29655">MLPSIAKHAASHQIHPLKKHGQNFIFDGSLCDKIVRASGLEENSNVLEIGPGTGGLTRSILHKNPKLLTVIETDERCIPLLNEIKQYHPNLNIIKQDALKLKLSDLNTNKITIISNLPYHIGTELVIRWLKESSLVASMTLMLQKEVVERICAKPSTKAYGRLSVICSLIATVEKCFDVAPTAFYPPPKVYSAIVKLTPLENIPNSDLISKVELITKMAFAGRRKMIKSSLKNLAPNISELLAKLNISNNCRAENLTPNDYLSLASLI</sequence>
<organism>
    <name type="scientific">Rickettsia bellii (strain OSU 85-389)</name>
    <dbReference type="NCBI Taxonomy" id="391896"/>
    <lineage>
        <taxon>Bacteria</taxon>
        <taxon>Pseudomonadati</taxon>
        <taxon>Pseudomonadota</taxon>
        <taxon>Alphaproteobacteria</taxon>
        <taxon>Rickettsiales</taxon>
        <taxon>Rickettsiaceae</taxon>
        <taxon>Rickettsieae</taxon>
        <taxon>Rickettsia</taxon>
        <taxon>belli group</taxon>
    </lineage>
</organism>
<keyword id="KW-0963">Cytoplasm</keyword>
<keyword id="KW-0489">Methyltransferase</keyword>
<keyword id="KW-0694">RNA-binding</keyword>
<keyword id="KW-0698">rRNA processing</keyword>
<keyword id="KW-0949">S-adenosyl-L-methionine</keyword>
<keyword id="KW-0808">Transferase</keyword>
<name>RSMA_RICB8</name>
<evidence type="ECO:0000255" key="1">
    <source>
        <dbReference type="HAMAP-Rule" id="MF_00607"/>
    </source>
</evidence>
<feature type="chain" id="PRO_1000056662" description="Ribosomal RNA small subunit methyltransferase A">
    <location>
        <begin position="1"/>
        <end position="268"/>
    </location>
</feature>
<feature type="binding site" evidence="1">
    <location>
        <position position="23"/>
    </location>
    <ligand>
        <name>S-adenosyl-L-methionine</name>
        <dbReference type="ChEBI" id="CHEBI:59789"/>
    </ligand>
</feature>
<feature type="binding site" evidence="1">
    <location>
        <position position="25"/>
    </location>
    <ligand>
        <name>S-adenosyl-L-methionine</name>
        <dbReference type="ChEBI" id="CHEBI:59789"/>
    </ligand>
</feature>
<feature type="binding site" evidence="1">
    <location>
        <position position="50"/>
    </location>
    <ligand>
        <name>S-adenosyl-L-methionine</name>
        <dbReference type="ChEBI" id="CHEBI:59789"/>
    </ligand>
</feature>
<feature type="binding site" evidence="1">
    <location>
        <position position="72"/>
    </location>
    <ligand>
        <name>S-adenosyl-L-methionine</name>
        <dbReference type="ChEBI" id="CHEBI:59789"/>
    </ligand>
</feature>
<feature type="binding site" evidence="1">
    <location>
        <position position="97"/>
    </location>
    <ligand>
        <name>S-adenosyl-L-methionine</name>
        <dbReference type="ChEBI" id="CHEBI:59789"/>
    </ligand>
</feature>
<feature type="binding site" evidence="1">
    <location>
        <position position="116"/>
    </location>
    <ligand>
        <name>S-adenosyl-L-methionine</name>
        <dbReference type="ChEBI" id="CHEBI:59789"/>
    </ligand>
</feature>
<reference key="1">
    <citation type="submission" date="2007-09" db="EMBL/GenBank/DDBJ databases">
        <title>Complete genome sequencing of Rickettsia bellii.</title>
        <authorList>
            <person name="Madan A."/>
            <person name="Lee H."/>
            <person name="Madan A."/>
            <person name="Yoon J.-G."/>
            <person name="Ryu G.-Y."/>
            <person name="Dasch G."/>
            <person name="Ereemeva M."/>
        </authorList>
    </citation>
    <scope>NUCLEOTIDE SEQUENCE [LARGE SCALE GENOMIC DNA]</scope>
    <source>
        <strain>OSU 85-389</strain>
    </source>
</reference>
<dbReference type="EC" id="2.1.1.182" evidence="1"/>
<dbReference type="EMBL" id="CP000849">
    <property type="protein sequence ID" value="ABV79677.1"/>
    <property type="molecule type" value="Genomic_DNA"/>
</dbReference>
<dbReference type="RefSeq" id="WP_012152186.1">
    <property type="nucleotide sequence ID" value="NC_009883.1"/>
</dbReference>
<dbReference type="SMR" id="A8GXS7"/>
<dbReference type="KEGG" id="rbo:A1I_06805"/>
<dbReference type="HOGENOM" id="CLU_041220_0_1_5"/>
<dbReference type="GO" id="GO:0005737">
    <property type="term" value="C:cytoplasm"/>
    <property type="evidence" value="ECO:0007669"/>
    <property type="project" value="UniProtKB-SubCell"/>
</dbReference>
<dbReference type="GO" id="GO:0052908">
    <property type="term" value="F:16S rRNA (adenine(1518)-N(6)/adenine(1519)-N(6))-dimethyltransferase activity"/>
    <property type="evidence" value="ECO:0007669"/>
    <property type="project" value="UniProtKB-EC"/>
</dbReference>
<dbReference type="GO" id="GO:0003723">
    <property type="term" value="F:RNA binding"/>
    <property type="evidence" value="ECO:0007669"/>
    <property type="project" value="UniProtKB-KW"/>
</dbReference>
<dbReference type="CDD" id="cd02440">
    <property type="entry name" value="AdoMet_MTases"/>
    <property type="match status" value="1"/>
</dbReference>
<dbReference type="Gene3D" id="1.10.8.100">
    <property type="entry name" value="Ribosomal RNA adenine dimethylase-like, domain 2"/>
    <property type="match status" value="1"/>
</dbReference>
<dbReference type="Gene3D" id="3.40.50.150">
    <property type="entry name" value="Vaccinia Virus protein VP39"/>
    <property type="match status" value="1"/>
</dbReference>
<dbReference type="HAMAP" id="MF_00607">
    <property type="entry name" value="16SrRNA_methyltr_A"/>
    <property type="match status" value="1"/>
</dbReference>
<dbReference type="InterPro" id="IPR001737">
    <property type="entry name" value="KsgA/Erm"/>
</dbReference>
<dbReference type="InterPro" id="IPR023165">
    <property type="entry name" value="rRNA_Ade_diMease-like_C"/>
</dbReference>
<dbReference type="InterPro" id="IPR020596">
    <property type="entry name" value="rRNA_Ade_Mease_Trfase_CS"/>
</dbReference>
<dbReference type="InterPro" id="IPR020598">
    <property type="entry name" value="rRNA_Ade_methylase_Trfase_N"/>
</dbReference>
<dbReference type="InterPro" id="IPR011530">
    <property type="entry name" value="rRNA_adenine_dimethylase"/>
</dbReference>
<dbReference type="InterPro" id="IPR029063">
    <property type="entry name" value="SAM-dependent_MTases_sf"/>
</dbReference>
<dbReference type="NCBIfam" id="TIGR00755">
    <property type="entry name" value="ksgA"/>
    <property type="match status" value="1"/>
</dbReference>
<dbReference type="PANTHER" id="PTHR11727">
    <property type="entry name" value="DIMETHYLADENOSINE TRANSFERASE"/>
    <property type="match status" value="1"/>
</dbReference>
<dbReference type="PANTHER" id="PTHR11727:SF7">
    <property type="entry name" value="DIMETHYLADENOSINE TRANSFERASE-RELATED"/>
    <property type="match status" value="1"/>
</dbReference>
<dbReference type="Pfam" id="PF00398">
    <property type="entry name" value="RrnaAD"/>
    <property type="match status" value="1"/>
</dbReference>
<dbReference type="SMART" id="SM00650">
    <property type="entry name" value="rADc"/>
    <property type="match status" value="1"/>
</dbReference>
<dbReference type="SUPFAM" id="SSF53335">
    <property type="entry name" value="S-adenosyl-L-methionine-dependent methyltransferases"/>
    <property type="match status" value="1"/>
</dbReference>
<dbReference type="PROSITE" id="PS01131">
    <property type="entry name" value="RRNA_A_DIMETH"/>
    <property type="match status" value="1"/>
</dbReference>
<dbReference type="PROSITE" id="PS51689">
    <property type="entry name" value="SAM_RNA_A_N6_MT"/>
    <property type="match status" value="1"/>
</dbReference>